<sequence length="505" mass="56527">MAALIQTIHGGVVVTRTLTLVYPSTFTSRHKALNQMTSSSNSGLRRFLFTPPQRLSQGICYWGAELSNNVSWTYKTKMVVRSKAGAVPLMKHGDRFLSSLSSPALAGDPSAINRHIKKFVAASPKSVALNVLSHLLSDQTSHPHLSFFALSLYSEITEASWFDWNPKLIAELIALLNKQERFDESETLLSTAVSRLKSNERDFTLFLCNLVESNSKQGSIQGFSEASFRLREIIQRSSSVYVKTQAYKSMVSGLCNMDQPHDAERVIEEMRMEKIKPGLFEYKSVLYGYGRLGLFDDMNRVVHRMGTEGHKIDTVCSNMVLSSYGAHDALPQMGSWLQKLKGFNVPFSIRTYNSVLNSCPTIISMLKDLDSCPVSLSELRTFLNEDEALLVHELTQSSVLDEAIEWNAVEGKLDLHGMHLSSSYLILLQWMDETRLRFSEEKCVIPAEIVVVSGSGKHSNVRGESPVKALVKKIMVRTGSPMRIDRKNVGSFIAKGKTVKEWLCK</sequence>
<keyword id="KW-0025">Alternative splicing</keyword>
<keyword id="KW-1185">Reference proteome</keyword>
<keyword id="KW-0677">Repeat</keyword>
<dbReference type="EMBL" id="CP002685">
    <property type="protein sequence ID" value="AEC06575.1"/>
    <property type="molecule type" value="Genomic_DNA"/>
</dbReference>
<dbReference type="EMBL" id="CP002685">
    <property type="protein sequence ID" value="AEC06576.1"/>
    <property type="molecule type" value="Genomic_DNA"/>
</dbReference>
<dbReference type="EMBL" id="CP002685">
    <property type="protein sequence ID" value="ANM61874.1"/>
    <property type="molecule type" value="Genomic_DNA"/>
</dbReference>
<dbReference type="EMBL" id="AK118968">
    <property type="protein sequence ID" value="BAC43545.1"/>
    <property type="molecule type" value="mRNA"/>
</dbReference>
<dbReference type="EMBL" id="AF370201">
    <property type="protein sequence ID" value="AAK44016.1"/>
    <property type="molecule type" value="mRNA"/>
</dbReference>
<dbReference type="EMBL" id="AY113883">
    <property type="protein sequence ID" value="AAM44931.1"/>
    <property type="molecule type" value="mRNA"/>
</dbReference>
<dbReference type="EMBL" id="AK229179">
    <property type="protein sequence ID" value="BAF01049.1"/>
    <property type="molecule type" value="mRNA"/>
</dbReference>
<dbReference type="PIR" id="C84547">
    <property type="entry name" value="C84547"/>
</dbReference>
<dbReference type="RefSeq" id="NP_001324066.1">
    <molecule id="Q8GWA9-2"/>
    <property type="nucleotide sequence ID" value="NM_001335531.1"/>
</dbReference>
<dbReference type="RefSeq" id="NP_565402.1">
    <molecule id="Q8GWA9-3"/>
    <property type="nucleotide sequence ID" value="NM_127257.3"/>
</dbReference>
<dbReference type="RefSeq" id="NP_849962.1">
    <molecule id="Q8GWA9-1"/>
    <property type="nucleotide sequence ID" value="NM_179631.2"/>
</dbReference>
<dbReference type="SMR" id="Q8GWA9"/>
<dbReference type="FunCoup" id="Q8GWA9">
    <property type="interactions" value="2174"/>
</dbReference>
<dbReference type="STRING" id="3702.Q8GWA9"/>
<dbReference type="PaxDb" id="3702-AT2G17033.2"/>
<dbReference type="ProteomicsDB" id="249422">
    <molecule id="Q8GWA9-1"/>
</dbReference>
<dbReference type="EnsemblPlants" id="AT2G17033.1">
    <molecule id="Q8GWA9-3"/>
    <property type="protein sequence ID" value="AT2G17033.1"/>
    <property type="gene ID" value="AT2G17033"/>
</dbReference>
<dbReference type="EnsemblPlants" id="AT2G17033.2">
    <molecule id="Q8GWA9-1"/>
    <property type="protein sequence ID" value="AT2G17033.2"/>
    <property type="gene ID" value="AT2G17033"/>
</dbReference>
<dbReference type="EnsemblPlants" id="AT2G17033.3">
    <molecule id="Q8GWA9-2"/>
    <property type="protein sequence ID" value="AT2G17033.3"/>
    <property type="gene ID" value="AT2G17033"/>
</dbReference>
<dbReference type="GeneID" id="816207"/>
<dbReference type="Gramene" id="AT2G17033.1">
    <molecule id="Q8GWA9-3"/>
    <property type="protein sequence ID" value="AT2G17033.1"/>
    <property type="gene ID" value="AT2G17033"/>
</dbReference>
<dbReference type="Gramene" id="AT2G17033.2">
    <molecule id="Q8GWA9-1"/>
    <property type="protein sequence ID" value="AT2G17033.2"/>
    <property type="gene ID" value="AT2G17033"/>
</dbReference>
<dbReference type="Gramene" id="AT2G17033.3">
    <molecule id="Q8GWA9-2"/>
    <property type="protein sequence ID" value="AT2G17033.3"/>
    <property type="gene ID" value="AT2G17033"/>
</dbReference>
<dbReference type="KEGG" id="ath:AT2G17033"/>
<dbReference type="Araport" id="AT2G17033"/>
<dbReference type="TAIR" id="AT2G17033"/>
<dbReference type="eggNOG" id="KOG4197">
    <property type="taxonomic scope" value="Eukaryota"/>
</dbReference>
<dbReference type="HOGENOM" id="CLU_564267_0_0_1"/>
<dbReference type="InParanoid" id="Q8GWA9"/>
<dbReference type="OMA" id="WSESEVK"/>
<dbReference type="PhylomeDB" id="Q8GWA9"/>
<dbReference type="PRO" id="PR:Q8GWA9"/>
<dbReference type="Proteomes" id="UP000006548">
    <property type="component" value="Chromosome 2"/>
</dbReference>
<dbReference type="ExpressionAtlas" id="Q8GWA9">
    <property type="expression patterns" value="baseline and differential"/>
</dbReference>
<dbReference type="Gene3D" id="3.30.1370.110">
    <property type="match status" value="1"/>
</dbReference>
<dbReference type="Gene3D" id="1.25.40.10">
    <property type="entry name" value="Tetratricopeptide repeat domain"/>
    <property type="match status" value="1"/>
</dbReference>
<dbReference type="InterPro" id="IPR002885">
    <property type="entry name" value="Pentatricopeptide_rpt"/>
</dbReference>
<dbReference type="InterPro" id="IPR002625">
    <property type="entry name" value="Smr_dom"/>
</dbReference>
<dbReference type="InterPro" id="IPR036063">
    <property type="entry name" value="Smr_dom_sf"/>
</dbReference>
<dbReference type="InterPro" id="IPR011990">
    <property type="entry name" value="TPR-like_helical_dom_sf"/>
</dbReference>
<dbReference type="NCBIfam" id="TIGR00756">
    <property type="entry name" value="PPR"/>
    <property type="match status" value="2"/>
</dbReference>
<dbReference type="PANTHER" id="PTHR47447:SF15">
    <property type="entry name" value="OS02G0120000 PROTEIN"/>
    <property type="match status" value="1"/>
</dbReference>
<dbReference type="PANTHER" id="PTHR47447">
    <property type="entry name" value="OS03G0856100 PROTEIN"/>
    <property type="match status" value="1"/>
</dbReference>
<dbReference type="Pfam" id="PF01535">
    <property type="entry name" value="PPR"/>
    <property type="match status" value="2"/>
</dbReference>
<dbReference type="SMART" id="SM00463">
    <property type="entry name" value="SMR"/>
    <property type="match status" value="1"/>
</dbReference>
<dbReference type="SUPFAM" id="SSF160443">
    <property type="entry name" value="SMR domain-like"/>
    <property type="match status" value="1"/>
</dbReference>
<dbReference type="PROSITE" id="PS51375">
    <property type="entry name" value="PPR"/>
    <property type="match status" value="2"/>
</dbReference>
<dbReference type="PROSITE" id="PS50828">
    <property type="entry name" value="SMR"/>
    <property type="match status" value="1"/>
</dbReference>
<protein>
    <recommendedName>
        <fullName>Pentatricopeptide repeat-containing protein At2g17033</fullName>
    </recommendedName>
</protein>
<gene>
    <name type="ordered locus">At2g17033</name>
    <name type="ORF">F6P23.19</name>
</gene>
<accession>Q8GWA9</accession>
<accession>Q0WPA0</accession>
<accession>Q7XJL8</accession>
<accession>Q94K83</accession>
<name>PP157_ARATH</name>
<organism>
    <name type="scientific">Arabidopsis thaliana</name>
    <name type="common">Mouse-ear cress</name>
    <dbReference type="NCBI Taxonomy" id="3702"/>
    <lineage>
        <taxon>Eukaryota</taxon>
        <taxon>Viridiplantae</taxon>
        <taxon>Streptophyta</taxon>
        <taxon>Embryophyta</taxon>
        <taxon>Tracheophyta</taxon>
        <taxon>Spermatophyta</taxon>
        <taxon>Magnoliopsida</taxon>
        <taxon>eudicotyledons</taxon>
        <taxon>Gunneridae</taxon>
        <taxon>Pentapetalae</taxon>
        <taxon>rosids</taxon>
        <taxon>malvids</taxon>
        <taxon>Brassicales</taxon>
        <taxon>Brassicaceae</taxon>
        <taxon>Camelineae</taxon>
        <taxon>Arabidopsis</taxon>
    </lineage>
</organism>
<comment type="alternative products">
    <event type="alternative splicing"/>
    <isoform>
        <id>Q8GWA9-1</id>
        <name>1</name>
        <sequence type="displayed"/>
    </isoform>
    <isoform>
        <id>Q8GWA9-2</id>
        <name>2</name>
        <sequence type="described" ref="VSP_022943"/>
    </isoform>
    <isoform>
        <id>Q8GWA9-3</id>
        <name>3</name>
        <sequence type="described" ref="VSP_027475"/>
    </isoform>
</comment>
<comment type="miscellaneous">
    <molecule>Isoform 2</molecule>
    <text evidence="4">May be due to a competing donor splice site.</text>
</comment>
<comment type="miscellaneous">
    <molecule>Isoform 3</molecule>
    <text evidence="4">May be due to a competing donor splice site.</text>
</comment>
<comment type="similarity">
    <text evidence="4">Belongs to the PPR family. P subfamily.</text>
</comment>
<comment type="online information" name="Pentatricopeptide repeat proteins">
    <link uri="https://ppr.plantenergy.uwa.edu.au"/>
</comment>
<feature type="chain" id="PRO_0000274928" description="Pentatricopeptide repeat-containing protein At2g17033">
    <location>
        <begin position="1"/>
        <end position="505"/>
    </location>
</feature>
<feature type="repeat" description="PPR 1">
    <location>
        <begin position="243"/>
        <end position="277"/>
    </location>
</feature>
<feature type="repeat" description="PPR 2">
    <location>
        <begin position="278"/>
        <end position="312"/>
    </location>
</feature>
<feature type="repeat" description="PPR 3">
    <location>
        <begin position="313"/>
        <end position="347"/>
    </location>
</feature>
<feature type="domain" description="Smr" evidence="1">
    <location>
        <begin position="413"/>
        <end position="503"/>
    </location>
</feature>
<feature type="splice variant" id="VSP_022943" description="In isoform 2." evidence="3">
    <original>AALIQTIHGG</original>
    <variation>VVNPTC</variation>
    <location>
        <begin position="2"/>
        <end position="11"/>
    </location>
</feature>
<feature type="splice variant" id="VSP_027475" description="In isoform 3." evidence="2">
    <location>
        <position position="11"/>
    </location>
</feature>
<proteinExistence type="evidence at transcript level"/>
<evidence type="ECO:0000255" key="1">
    <source>
        <dbReference type="PROSITE-ProRule" id="PRU00321"/>
    </source>
</evidence>
<evidence type="ECO:0000303" key="2">
    <source>
    </source>
</evidence>
<evidence type="ECO:0000303" key="3">
    <source ref="5"/>
</evidence>
<evidence type="ECO:0000305" key="4"/>
<reference key="1">
    <citation type="journal article" date="1999" name="Nature">
        <title>Sequence and analysis of chromosome 2 of the plant Arabidopsis thaliana.</title>
        <authorList>
            <person name="Lin X."/>
            <person name="Kaul S."/>
            <person name="Rounsley S.D."/>
            <person name="Shea T.P."/>
            <person name="Benito M.-I."/>
            <person name="Town C.D."/>
            <person name="Fujii C.Y."/>
            <person name="Mason T.M."/>
            <person name="Bowman C.L."/>
            <person name="Barnstead M.E."/>
            <person name="Feldblyum T.V."/>
            <person name="Buell C.R."/>
            <person name="Ketchum K.A."/>
            <person name="Lee J.J."/>
            <person name="Ronning C.M."/>
            <person name="Koo H.L."/>
            <person name="Moffat K.S."/>
            <person name="Cronin L.A."/>
            <person name="Shen M."/>
            <person name="Pai G."/>
            <person name="Van Aken S."/>
            <person name="Umayam L."/>
            <person name="Tallon L.J."/>
            <person name="Gill J.E."/>
            <person name="Adams M.D."/>
            <person name="Carrera A.J."/>
            <person name="Creasy T.H."/>
            <person name="Goodman H.M."/>
            <person name="Somerville C.R."/>
            <person name="Copenhaver G.P."/>
            <person name="Preuss D."/>
            <person name="Nierman W.C."/>
            <person name="White O."/>
            <person name="Eisen J.A."/>
            <person name="Salzberg S.L."/>
            <person name="Fraser C.M."/>
            <person name="Venter J.C."/>
        </authorList>
    </citation>
    <scope>NUCLEOTIDE SEQUENCE [LARGE SCALE GENOMIC DNA]</scope>
    <source>
        <strain>cv. Columbia</strain>
    </source>
</reference>
<reference key="2">
    <citation type="journal article" date="2017" name="Plant J.">
        <title>Araport11: a complete reannotation of the Arabidopsis thaliana reference genome.</title>
        <authorList>
            <person name="Cheng C.Y."/>
            <person name="Krishnakumar V."/>
            <person name="Chan A.P."/>
            <person name="Thibaud-Nissen F."/>
            <person name="Schobel S."/>
            <person name="Town C.D."/>
        </authorList>
    </citation>
    <scope>GENOME REANNOTATION</scope>
    <source>
        <strain>cv. Columbia</strain>
    </source>
</reference>
<reference key="3">
    <citation type="journal article" date="2002" name="Science">
        <title>Functional annotation of a full-length Arabidopsis cDNA collection.</title>
        <authorList>
            <person name="Seki M."/>
            <person name="Narusaka M."/>
            <person name="Kamiya A."/>
            <person name="Ishida J."/>
            <person name="Satou M."/>
            <person name="Sakurai T."/>
            <person name="Nakajima M."/>
            <person name="Enju A."/>
            <person name="Akiyama K."/>
            <person name="Oono Y."/>
            <person name="Muramatsu M."/>
            <person name="Hayashizaki Y."/>
            <person name="Kawai J."/>
            <person name="Carninci P."/>
            <person name="Itoh M."/>
            <person name="Ishii Y."/>
            <person name="Arakawa T."/>
            <person name="Shibata K."/>
            <person name="Shinagawa A."/>
            <person name="Shinozaki K."/>
        </authorList>
    </citation>
    <scope>NUCLEOTIDE SEQUENCE [LARGE SCALE MRNA] (ISOFORM 1)</scope>
    <source>
        <strain>cv. Columbia</strain>
    </source>
</reference>
<reference key="4">
    <citation type="journal article" date="2003" name="Science">
        <title>Empirical analysis of transcriptional activity in the Arabidopsis genome.</title>
        <authorList>
            <person name="Yamada K."/>
            <person name="Lim J."/>
            <person name="Dale J.M."/>
            <person name="Chen H."/>
            <person name="Shinn P."/>
            <person name="Palm C.J."/>
            <person name="Southwick A.M."/>
            <person name="Wu H.C."/>
            <person name="Kim C.J."/>
            <person name="Nguyen M."/>
            <person name="Pham P.K."/>
            <person name="Cheuk R.F."/>
            <person name="Karlin-Newmann G."/>
            <person name="Liu S.X."/>
            <person name="Lam B."/>
            <person name="Sakano H."/>
            <person name="Wu T."/>
            <person name="Yu G."/>
            <person name="Miranda M."/>
            <person name="Quach H.L."/>
            <person name="Tripp M."/>
            <person name="Chang C.H."/>
            <person name="Lee J.M."/>
            <person name="Toriumi M.J."/>
            <person name="Chan M.M."/>
            <person name="Tang C.C."/>
            <person name="Onodera C.S."/>
            <person name="Deng J.M."/>
            <person name="Akiyama K."/>
            <person name="Ansari Y."/>
            <person name="Arakawa T."/>
            <person name="Banh J."/>
            <person name="Banno F."/>
            <person name="Bowser L."/>
            <person name="Brooks S.Y."/>
            <person name="Carninci P."/>
            <person name="Chao Q."/>
            <person name="Choy N."/>
            <person name="Enju A."/>
            <person name="Goldsmith A.D."/>
            <person name="Gurjal M."/>
            <person name="Hansen N.F."/>
            <person name="Hayashizaki Y."/>
            <person name="Johnson-Hopson C."/>
            <person name="Hsuan V.W."/>
            <person name="Iida K."/>
            <person name="Karnes M."/>
            <person name="Khan S."/>
            <person name="Koesema E."/>
            <person name="Ishida J."/>
            <person name="Jiang P.X."/>
            <person name="Jones T."/>
            <person name="Kawai J."/>
            <person name="Kamiya A."/>
            <person name="Meyers C."/>
            <person name="Nakajima M."/>
            <person name="Narusaka M."/>
            <person name="Seki M."/>
            <person name="Sakurai T."/>
            <person name="Satou M."/>
            <person name="Tamse R."/>
            <person name="Vaysberg M."/>
            <person name="Wallender E.K."/>
            <person name="Wong C."/>
            <person name="Yamamura Y."/>
            <person name="Yuan S."/>
            <person name="Shinozaki K."/>
            <person name="Davis R.W."/>
            <person name="Theologis A."/>
            <person name="Ecker J.R."/>
        </authorList>
    </citation>
    <scope>NUCLEOTIDE SEQUENCE [LARGE SCALE MRNA] (ISOFORM 3)</scope>
    <source>
        <strain>cv. Columbia</strain>
    </source>
</reference>
<reference key="5">
    <citation type="submission" date="2006-07" db="EMBL/GenBank/DDBJ databases">
        <title>Large-scale analysis of RIKEN Arabidopsis full-length (RAFL) cDNAs.</title>
        <authorList>
            <person name="Totoki Y."/>
            <person name="Seki M."/>
            <person name="Ishida J."/>
            <person name="Nakajima M."/>
            <person name="Enju A."/>
            <person name="Kamiya A."/>
            <person name="Narusaka M."/>
            <person name="Shin-i T."/>
            <person name="Nakagawa M."/>
            <person name="Sakamoto N."/>
            <person name="Oishi K."/>
            <person name="Kohara Y."/>
            <person name="Kobayashi M."/>
            <person name="Toyoda A."/>
            <person name="Sakaki Y."/>
            <person name="Sakurai T."/>
            <person name="Iida K."/>
            <person name="Akiyama K."/>
            <person name="Satou M."/>
            <person name="Toyoda T."/>
            <person name="Konagaya A."/>
            <person name="Carninci P."/>
            <person name="Kawai J."/>
            <person name="Hayashizaki Y."/>
            <person name="Shinozaki K."/>
        </authorList>
    </citation>
    <scope>NUCLEOTIDE SEQUENCE [LARGE SCALE MRNA] (ISOFORM 2)</scope>
    <source>
        <strain>cv. Columbia</strain>
    </source>
</reference>
<reference key="6">
    <citation type="journal article" date="2004" name="Plant Cell">
        <title>Genome-wide analysis of Arabidopsis pentatricopeptide repeat proteins reveals their essential role in organelle biogenesis.</title>
        <authorList>
            <person name="Lurin C."/>
            <person name="Andres C."/>
            <person name="Aubourg S."/>
            <person name="Bellaoui M."/>
            <person name="Bitton F."/>
            <person name="Bruyere C."/>
            <person name="Caboche M."/>
            <person name="Debast C."/>
            <person name="Gualberto J."/>
            <person name="Hoffmann B."/>
            <person name="Lecharny A."/>
            <person name="Le Ret M."/>
            <person name="Martin-Magniette M.-L."/>
            <person name="Mireau H."/>
            <person name="Peeters N."/>
            <person name="Renou J.-P."/>
            <person name="Szurek B."/>
            <person name="Taconnat L."/>
            <person name="Small I."/>
        </authorList>
    </citation>
    <scope>GENE FAMILY</scope>
</reference>